<accession>B0KMQ6</accession>
<name>MNMA_PSEPG</name>
<reference key="1">
    <citation type="submission" date="2008-01" db="EMBL/GenBank/DDBJ databases">
        <title>Complete sequence of Pseudomonas putida GB-1.</title>
        <authorList>
            <consortium name="US DOE Joint Genome Institute"/>
            <person name="Copeland A."/>
            <person name="Lucas S."/>
            <person name="Lapidus A."/>
            <person name="Barry K."/>
            <person name="Glavina del Rio T."/>
            <person name="Dalin E."/>
            <person name="Tice H."/>
            <person name="Pitluck S."/>
            <person name="Bruce D."/>
            <person name="Goodwin L."/>
            <person name="Chertkov O."/>
            <person name="Brettin T."/>
            <person name="Detter J.C."/>
            <person name="Han C."/>
            <person name="Kuske C.R."/>
            <person name="Schmutz J."/>
            <person name="Larimer F."/>
            <person name="Land M."/>
            <person name="Hauser L."/>
            <person name="Kyrpides N."/>
            <person name="Kim E."/>
            <person name="McCarthy J.K."/>
            <person name="Richardson P."/>
        </authorList>
    </citation>
    <scope>NUCLEOTIDE SEQUENCE [LARGE SCALE GENOMIC DNA]</scope>
    <source>
        <strain>GB-1</strain>
    </source>
</reference>
<comment type="function">
    <text evidence="1">Catalyzes the 2-thiolation of uridine at the wobble position (U34) of tRNA, leading to the formation of s(2)U34.</text>
</comment>
<comment type="catalytic activity">
    <reaction evidence="1">
        <text>S-sulfanyl-L-cysteinyl-[protein] + uridine(34) in tRNA + AH2 + ATP = 2-thiouridine(34) in tRNA + L-cysteinyl-[protein] + A + AMP + diphosphate + H(+)</text>
        <dbReference type="Rhea" id="RHEA:47032"/>
        <dbReference type="Rhea" id="RHEA-COMP:10131"/>
        <dbReference type="Rhea" id="RHEA-COMP:11726"/>
        <dbReference type="Rhea" id="RHEA-COMP:11727"/>
        <dbReference type="Rhea" id="RHEA-COMP:11728"/>
        <dbReference type="ChEBI" id="CHEBI:13193"/>
        <dbReference type="ChEBI" id="CHEBI:15378"/>
        <dbReference type="ChEBI" id="CHEBI:17499"/>
        <dbReference type="ChEBI" id="CHEBI:29950"/>
        <dbReference type="ChEBI" id="CHEBI:30616"/>
        <dbReference type="ChEBI" id="CHEBI:33019"/>
        <dbReference type="ChEBI" id="CHEBI:61963"/>
        <dbReference type="ChEBI" id="CHEBI:65315"/>
        <dbReference type="ChEBI" id="CHEBI:87170"/>
        <dbReference type="ChEBI" id="CHEBI:456215"/>
        <dbReference type="EC" id="2.8.1.13"/>
    </reaction>
</comment>
<comment type="subcellular location">
    <subcellularLocation>
        <location evidence="1">Cytoplasm</location>
    </subcellularLocation>
</comment>
<comment type="similarity">
    <text evidence="1">Belongs to the MnmA/TRMU family.</text>
</comment>
<organism>
    <name type="scientific">Pseudomonas putida (strain GB-1)</name>
    <dbReference type="NCBI Taxonomy" id="76869"/>
    <lineage>
        <taxon>Bacteria</taxon>
        <taxon>Pseudomonadati</taxon>
        <taxon>Pseudomonadota</taxon>
        <taxon>Gammaproteobacteria</taxon>
        <taxon>Pseudomonadales</taxon>
        <taxon>Pseudomonadaceae</taxon>
        <taxon>Pseudomonas</taxon>
    </lineage>
</organism>
<feature type="chain" id="PRO_1000076568" description="tRNA-specific 2-thiouridylase MnmA">
    <location>
        <begin position="1"/>
        <end position="374"/>
    </location>
</feature>
<feature type="region of interest" description="Interaction with target base in tRNA" evidence="1">
    <location>
        <begin position="103"/>
        <end position="105"/>
    </location>
</feature>
<feature type="region of interest" description="Interaction with tRNA" evidence="1">
    <location>
        <begin position="154"/>
        <end position="156"/>
    </location>
</feature>
<feature type="region of interest" description="Interaction with tRNA" evidence="1">
    <location>
        <begin position="316"/>
        <end position="317"/>
    </location>
</feature>
<feature type="active site" description="Nucleophile" evidence="1">
    <location>
        <position position="108"/>
    </location>
</feature>
<feature type="active site" description="Cysteine persulfide intermediate" evidence="1">
    <location>
        <position position="204"/>
    </location>
</feature>
<feature type="binding site" evidence="1">
    <location>
        <begin position="17"/>
        <end position="24"/>
    </location>
    <ligand>
        <name>ATP</name>
        <dbReference type="ChEBI" id="CHEBI:30616"/>
    </ligand>
</feature>
<feature type="binding site" evidence="1">
    <location>
        <position position="43"/>
    </location>
    <ligand>
        <name>ATP</name>
        <dbReference type="ChEBI" id="CHEBI:30616"/>
    </ligand>
</feature>
<feature type="binding site" evidence="1">
    <location>
        <position position="132"/>
    </location>
    <ligand>
        <name>ATP</name>
        <dbReference type="ChEBI" id="CHEBI:30616"/>
    </ligand>
</feature>
<feature type="site" description="Interaction with tRNA" evidence="1">
    <location>
        <position position="133"/>
    </location>
</feature>
<feature type="site" description="Interaction with tRNA" evidence="1">
    <location>
        <position position="348"/>
    </location>
</feature>
<feature type="disulfide bond" description="Alternate" evidence="1">
    <location>
        <begin position="108"/>
        <end position="204"/>
    </location>
</feature>
<protein>
    <recommendedName>
        <fullName evidence="1">tRNA-specific 2-thiouridylase MnmA</fullName>
        <ecNumber evidence="1">2.8.1.13</ecNumber>
    </recommendedName>
</protein>
<gene>
    <name evidence="1" type="primary">mnmA</name>
    <name type="synonym">trmU</name>
    <name type="ordered locus">PputGB1_3619</name>
</gene>
<dbReference type="EC" id="2.8.1.13" evidence="1"/>
<dbReference type="EMBL" id="CP000926">
    <property type="protein sequence ID" value="ABY99510.1"/>
    <property type="molecule type" value="Genomic_DNA"/>
</dbReference>
<dbReference type="RefSeq" id="WP_012273221.1">
    <property type="nucleotide sequence ID" value="NC_010322.1"/>
</dbReference>
<dbReference type="SMR" id="B0KMQ6"/>
<dbReference type="KEGG" id="ppg:PputGB1_3619"/>
<dbReference type="eggNOG" id="COG0482">
    <property type="taxonomic scope" value="Bacteria"/>
</dbReference>
<dbReference type="HOGENOM" id="CLU_035188_1_0_6"/>
<dbReference type="Proteomes" id="UP000002157">
    <property type="component" value="Chromosome"/>
</dbReference>
<dbReference type="GO" id="GO:0005737">
    <property type="term" value="C:cytoplasm"/>
    <property type="evidence" value="ECO:0007669"/>
    <property type="project" value="UniProtKB-SubCell"/>
</dbReference>
<dbReference type="GO" id="GO:0005524">
    <property type="term" value="F:ATP binding"/>
    <property type="evidence" value="ECO:0007669"/>
    <property type="project" value="UniProtKB-KW"/>
</dbReference>
<dbReference type="GO" id="GO:0000049">
    <property type="term" value="F:tRNA binding"/>
    <property type="evidence" value="ECO:0007669"/>
    <property type="project" value="UniProtKB-KW"/>
</dbReference>
<dbReference type="GO" id="GO:0103016">
    <property type="term" value="F:tRNA-uridine 2-sulfurtransferase activity"/>
    <property type="evidence" value="ECO:0007669"/>
    <property type="project" value="UniProtKB-EC"/>
</dbReference>
<dbReference type="GO" id="GO:0002143">
    <property type="term" value="P:tRNA wobble position uridine thiolation"/>
    <property type="evidence" value="ECO:0007669"/>
    <property type="project" value="TreeGrafter"/>
</dbReference>
<dbReference type="CDD" id="cd01998">
    <property type="entry name" value="MnmA_TRMU-like"/>
    <property type="match status" value="1"/>
</dbReference>
<dbReference type="FunFam" id="2.30.30.280:FF:000001">
    <property type="entry name" value="tRNA-specific 2-thiouridylase MnmA"/>
    <property type="match status" value="1"/>
</dbReference>
<dbReference type="FunFam" id="2.40.30.10:FF:000023">
    <property type="entry name" value="tRNA-specific 2-thiouridylase MnmA"/>
    <property type="match status" value="1"/>
</dbReference>
<dbReference type="FunFam" id="3.40.50.620:FF:000004">
    <property type="entry name" value="tRNA-specific 2-thiouridylase MnmA"/>
    <property type="match status" value="1"/>
</dbReference>
<dbReference type="Gene3D" id="2.30.30.280">
    <property type="entry name" value="Adenine nucleotide alpha hydrolases-like domains"/>
    <property type="match status" value="1"/>
</dbReference>
<dbReference type="Gene3D" id="3.40.50.620">
    <property type="entry name" value="HUPs"/>
    <property type="match status" value="1"/>
</dbReference>
<dbReference type="Gene3D" id="2.40.30.10">
    <property type="entry name" value="Translation factors"/>
    <property type="match status" value="1"/>
</dbReference>
<dbReference type="HAMAP" id="MF_00144">
    <property type="entry name" value="tRNA_thiouridyl_MnmA"/>
    <property type="match status" value="1"/>
</dbReference>
<dbReference type="InterPro" id="IPR004506">
    <property type="entry name" value="MnmA-like"/>
</dbReference>
<dbReference type="InterPro" id="IPR046885">
    <property type="entry name" value="MnmA-like_C"/>
</dbReference>
<dbReference type="InterPro" id="IPR046884">
    <property type="entry name" value="MnmA-like_central"/>
</dbReference>
<dbReference type="InterPro" id="IPR023382">
    <property type="entry name" value="MnmA-like_central_sf"/>
</dbReference>
<dbReference type="InterPro" id="IPR014729">
    <property type="entry name" value="Rossmann-like_a/b/a_fold"/>
</dbReference>
<dbReference type="NCBIfam" id="NF001138">
    <property type="entry name" value="PRK00143.1"/>
    <property type="match status" value="1"/>
</dbReference>
<dbReference type="NCBIfam" id="TIGR00420">
    <property type="entry name" value="trmU"/>
    <property type="match status" value="1"/>
</dbReference>
<dbReference type="PANTHER" id="PTHR11933:SF5">
    <property type="entry name" value="MITOCHONDRIAL TRNA-SPECIFIC 2-THIOURIDYLASE 1"/>
    <property type="match status" value="1"/>
</dbReference>
<dbReference type="PANTHER" id="PTHR11933">
    <property type="entry name" value="TRNA 5-METHYLAMINOMETHYL-2-THIOURIDYLATE -METHYLTRANSFERASE"/>
    <property type="match status" value="1"/>
</dbReference>
<dbReference type="Pfam" id="PF03054">
    <property type="entry name" value="tRNA_Me_trans"/>
    <property type="match status" value="1"/>
</dbReference>
<dbReference type="Pfam" id="PF20258">
    <property type="entry name" value="tRNA_Me_trans_C"/>
    <property type="match status" value="1"/>
</dbReference>
<dbReference type="Pfam" id="PF20259">
    <property type="entry name" value="tRNA_Me_trans_M"/>
    <property type="match status" value="1"/>
</dbReference>
<dbReference type="SUPFAM" id="SSF52402">
    <property type="entry name" value="Adenine nucleotide alpha hydrolases-like"/>
    <property type="match status" value="1"/>
</dbReference>
<proteinExistence type="inferred from homology"/>
<sequence length="374" mass="41578">MTSPALKDPAKTRVIVGMSGGVDSSVSALLLIEQGYQVEGLFMKNWEEDDGTEYCTAREDLADAQAVCDRIGIKLHTANFAAEYWDNVFEHFLEEYKAGRTPNPDILCNREIKFKAFLDYALSLGADLIATGHYVRRRDTGDLTELLKGLDPNKDQSYFLHAVGGKEIARTLFPVGELEKPEVRAIAEKHGLATAKKKDSTGICFIGERRFSDFLKQYLPAQPGDIETTEGEVIGRHHGLMYHTIGQRQGLGIGGLKDAGDEPWYVLHKDLTRNVLVVGQGNEHPWLFSRALLASEIFWVNPIDLSSPRQLTAKVRYRQSDQQCTLELTETGYRAVFDEPQRAVTPGQSVVFYDGEVCLGGGVIEAAEPWSPRA</sequence>
<evidence type="ECO:0000255" key="1">
    <source>
        <dbReference type="HAMAP-Rule" id="MF_00144"/>
    </source>
</evidence>
<keyword id="KW-0067">ATP-binding</keyword>
<keyword id="KW-0963">Cytoplasm</keyword>
<keyword id="KW-1015">Disulfide bond</keyword>
<keyword id="KW-0547">Nucleotide-binding</keyword>
<keyword id="KW-0694">RNA-binding</keyword>
<keyword id="KW-0808">Transferase</keyword>
<keyword id="KW-0819">tRNA processing</keyword>
<keyword id="KW-0820">tRNA-binding</keyword>